<sequence>MSTFVNDTVEDAIKTPELDQPFEALGLKDDEYARIKEILGRRPTDAELTVYSVMWSEHCSYKSSKVHLRYFGETTTEEMASKILAGIGENAGVVDIGDGNAVTFRVESHNHPSFVEPHQGAATGIGGIVRDIMAMGARPIAVMDQLRFGALDNPDTQRVLPGVVDGISHYGNCLGLPNIGGETVFDDSYAGNPLVNALCVGTLKVEDLKLAFASGTGNKVILFGSRTGLDGIGGVSVLGSASFEEGEERKLPAVQVGDPFAEKVLIECCLELYKAGVVVGIQDLGGGGLACATSELAAAGDGGMRVNLDNVPLRAENMSAAEILASESQERMCAVVTPENVERFLEICAKWDVTCAEIGEVTDEKDRYVVVHNGEVVIDAPPSTIDEGPVYNRPVARPENQDELQLEGEIARPVDVEDIKAAWLKLVASPALASRAFITEQYDRYVRGNTVQAKNANAGVLRIDEETNRGVAISADASGRYTKLEPNTGAQLALAEAYRNVVSTGARPVAVTNCLNFGSPENAGVMWQFKEAVHGLADGSKLLGIPVSGGNVSFYNQTGDEPILPTPVVGVLGVLDNVEQSIGNVLPSEDNDLYLLGETFDEFGGSIWQQVSGAGLNGLPPVVDLLNEQRLADLFVGSDLFAASHDLSEGGLGQTLAELAIHADKGMDVDLSQIHPSLFTSLFAESASRIVVATNRGEELEKRAAELGVPVFKLGRTNDSAVIAVKGADVEFNISVEELREAWTNTLPEAFGHAVGANAVVG</sequence>
<name>PURL_CORGB</name>
<comment type="function">
    <text evidence="1">Part of the phosphoribosylformylglycinamidine synthase complex involved in the purines biosynthetic pathway. Catalyzes the ATP-dependent conversion of formylglycinamide ribonucleotide (FGAR) and glutamine to yield formylglycinamidine ribonucleotide (FGAM) and glutamate. The FGAM synthase complex is composed of three subunits. PurQ produces an ammonia molecule by converting glutamine to glutamate. PurL transfers the ammonia molecule to FGAR to form FGAM in an ATP-dependent manner. PurS interacts with PurQ and PurL and is thought to assist in the transfer of the ammonia molecule from PurQ to PurL.</text>
</comment>
<comment type="catalytic activity">
    <reaction evidence="1">
        <text>N(2)-formyl-N(1)-(5-phospho-beta-D-ribosyl)glycinamide + L-glutamine + ATP + H2O = 2-formamido-N(1)-(5-O-phospho-beta-D-ribosyl)acetamidine + L-glutamate + ADP + phosphate + H(+)</text>
        <dbReference type="Rhea" id="RHEA:17129"/>
        <dbReference type="ChEBI" id="CHEBI:15377"/>
        <dbReference type="ChEBI" id="CHEBI:15378"/>
        <dbReference type="ChEBI" id="CHEBI:29985"/>
        <dbReference type="ChEBI" id="CHEBI:30616"/>
        <dbReference type="ChEBI" id="CHEBI:43474"/>
        <dbReference type="ChEBI" id="CHEBI:58359"/>
        <dbReference type="ChEBI" id="CHEBI:147286"/>
        <dbReference type="ChEBI" id="CHEBI:147287"/>
        <dbReference type="ChEBI" id="CHEBI:456216"/>
        <dbReference type="EC" id="6.3.5.3"/>
    </reaction>
</comment>
<comment type="pathway">
    <text evidence="1">Purine metabolism; IMP biosynthesis via de novo pathway; 5-amino-1-(5-phospho-D-ribosyl)imidazole from N(2)-formyl-N(1)-(5-phospho-D-ribosyl)glycinamide: step 1/2.</text>
</comment>
<comment type="subunit">
    <text evidence="1">Monomer. Part of the FGAM synthase complex composed of 1 PurL, 1 PurQ and 2 PurS subunits.</text>
</comment>
<comment type="subcellular location">
    <subcellularLocation>
        <location evidence="1">Cytoplasm</location>
    </subcellularLocation>
</comment>
<comment type="similarity">
    <text evidence="1">Belongs to the FGAMS family.</text>
</comment>
<gene>
    <name evidence="1" type="primary">purL</name>
    <name type="ordered locus">cgR_2491</name>
</gene>
<feature type="chain" id="PRO_1000050306" description="Phosphoribosylformylglycinamidine synthase subunit PurL">
    <location>
        <begin position="1"/>
        <end position="762"/>
    </location>
</feature>
<feature type="active site" evidence="1">
    <location>
        <position position="58"/>
    </location>
</feature>
<feature type="active site" description="Proton acceptor" evidence="1">
    <location>
        <position position="109"/>
    </location>
</feature>
<feature type="binding site" evidence="1">
    <location>
        <position position="61"/>
    </location>
    <ligand>
        <name>ATP</name>
        <dbReference type="ChEBI" id="CHEBI:30616"/>
    </ligand>
</feature>
<feature type="binding site" evidence="1">
    <location>
        <position position="105"/>
    </location>
    <ligand>
        <name>ATP</name>
        <dbReference type="ChEBI" id="CHEBI:30616"/>
    </ligand>
</feature>
<feature type="binding site" evidence="1">
    <location>
        <position position="107"/>
    </location>
    <ligand>
        <name>Mg(2+)</name>
        <dbReference type="ChEBI" id="CHEBI:18420"/>
        <label>1</label>
    </ligand>
</feature>
<feature type="binding site" evidence="1">
    <location>
        <begin position="108"/>
        <end position="111"/>
    </location>
    <ligand>
        <name>substrate</name>
    </ligand>
</feature>
<feature type="binding site" evidence="1">
    <location>
        <position position="130"/>
    </location>
    <ligand>
        <name>substrate</name>
    </ligand>
</feature>
<feature type="binding site" evidence="1">
    <location>
        <position position="131"/>
    </location>
    <ligand>
        <name>Mg(2+)</name>
        <dbReference type="ChEBI" id="CHEBI:18420"/>
        <label>2</label>
    </ligand>
</feature>
<feature type="binding site" evidence="1">
    <location>
        <position position="255"/>
    </location>
    <ligand>
        <name>substrate</name>
    </ligand>
</feature>
<feature type="binding site" evidence="1">
    <location>
        <position position="283"/>
    </location>
    <ligand>
        <name>Mg(2+)</name>
        <dbReference type="ChEBI" id="CHEBI:18420"/>
        <label>2</label>
    </ligand>
</feature>
<feature type="binding site" evidence="1">
    <location>
        <begin position="327"/>
        <end position="329"/>
    </location>
    <ligand>
        <name>substrate</name>
    </ligand>
</feature>
<feature type="binding site" evidence="1">
    <location>
        <position position="513"/>
    </location>
    <ligand>
        <name>ATP</name>
        <dbReference type="ChEBI" id="CHEBI:30616"/>
    </ligand>
</feature>
<feature type="binding site" evidence="1">
    <location>
        <position position="550"/>
    </location>
    <ligand>
        <name>ATP</name>
        <dbReference type="ChEBI" id="CHEBI:30616"/>
    </ligand>
</feature>
<feature type="binding site" evidence="1">
    <location>
        <position position="551"/>
    </location>
    <ligand>
        <name>Mg(2+)</name>
        <dbReference type="ChEBI" id="CHEBI:18420"/>
        <label>1</label>
    </ligand>
</feature>
<feature type="binding site" evidence="1">
    <location>
        <position position="553"/>
    </location>
    <ligand>
        <name>substrate</name>
    </ligand>
</feature>
<protein>
    <recommendedName>
        <fullName evidence="1">Phosphoribosylformylglycinamidine synthase subunit PurL</fullName>
        <shortName evidence="1">FGAM synthase</shortName>
        <ecNumber evidence="1">6.3.5.3</ecNumber>
    </recommendedName>
    <alternativeName>
        <fullName evidence="1">Formylglycinamide ribonucleotide amidotransferase subunit II</fullName>
        <shortName evidence="1">FGAR amidotransferase II</shortName>
        <shortName evidence="1">FGAR-AT II</shortName>
    </alternativeName>
    <alternativeName>
        <fullName evidence="1">Glutamine amidotransferase PurL</fullName>
    </alternativeName>
    <alternativeName>
        <fullName evidence="1">Phosphoribosylformylglycinamidine synthase subunit II</fullName>
    </alternativeName>
</protein>
<organism>
    <name type="scientific">Corynebacterium glutamicum (strain R)</name>
    <dbReference type="NCBI Taxonomy" id="340322"/>
    <lineage>
        <taxon>Bacteria</taxon>
        <taxon>Bacillati</taxon>
        <taxon>Actinomycetota</taxon>
        <taxon>Actinomycetes</taxon>
        <taxon>Mycobacteriales</taxon>
        <taxon>Corynebacteriaceae</taxon>
        <taxon>Corynebacterium</taxon>
    </lineage>
</organism>
<accession>A4QGY6</accession>
<reference key="1">
    <citation type="journal article" date="2007" name="Microbiology">
        <title>Comparative analysis of the Corynebacterium glutamicum group and complete genome sequence of strain R.</title>
        <authorList>
            <person name="Yukawa H."/>
            <person name="Omumasaba C.A."/>
            <person name="Nonaka H."/>
            <person name="Kos P."/>
            <person name="Okai N."/>
            <person name="Suzuki N."/>
            <person name="Suda M."/>
            <person name="Tsuge Y."/>
            <person name="Watanabe J."/>
            <person name="Ikeda Y."/>
            <person name="Vertes A.A."/>
            <person name="Inui M."/>
        </authorList>
    </citation>
    <scope>NUCLEOTIDE SEQUENCE [LARGE SCALE GENOMIC DNA]</scope>
    <source>
        <strain>R</strain>
    </source>
</reference>
<proteinExistence type="inferred from homology"/>
<evidence type="ECO:0000255" key="1">
    <source>
        <dbReference type="HAMAP-Rule" id="MF_00420"/>
    </source>
</evidence>
<keyword id="KW-0067">ATP-binding</keyword>
<keyword id="KW-0963">Cytoplasm</keyword>
<keyword id="KW-0436">Ligase</keyword>
<keyword id="KW-0460">Magnesium</keyword>
<keyword id="KW-0479">Metal-binding</keyword>
<keyword id="KW-0547">Nucleotide-binding</keyword>
<keyword id="KW-0658">Purine biosynthesis</keyword>
<dbReference type="EC" id="6.3.5.3" evidence="1"/>
<dbReference type="EMBL" id="AP009044">
    <property type="protein sequence ID" value="BAF55502.1"/>
    <property type="molecule type" value="Genomic_DNA"/>
</dbReference>
<dbReference type="RefSeq" id="WP_003854014.1">
    <property type="nucleotide sequence ID" value="NC_009342.1"/>
</dbReference>
<dbReference type="SMR" id="A4QGY6"/>
<dbReference type="KEGG" id="cgt:cgR_2491"/>
<dbReference type="HOGENOM" id="CLU_003100_0_1_11"/>
<dbReference type="PhylomeDB" id="A4QGY6"/>
<dbReference type="UniPathway" id="UPA00074">
    <property type="reaction ID" value="UER00128"/>
</dbReference>
<dbReference type="Proteomes" id="UP000006698">
    <property type="component" value="Chromosome"/>
</dbReference>
<dbReference type="GO" id="GO:0005737">
    <property type="term" value="C:cytoplasm"/>
    <property type="evidence" value="ECO:0007669"/>
    <property type="project" value="UniProtKB-SubCell"/>
</dbReference>
<dbReference type="GO" id="GO:0005524">
    <property type="term" value="F:ATP binding"/>
    <property type="evidence" value="ECO:0007669"/>
    <property type="project" value="UniProtKB-UniRule"/>
</dbReference>
<dbReference type="GO" id="GO:0000287">
    <property type="term" value="F:magnesium ion binding"/>
    <property type="evidence" value="ECO:0007669"/>
    <property type="project" value="UniProtKB-UniRule"/>
</dbReference>
<dbReference type="GO" id="GO:0004642">
    <property type="term" value="F:phosphoribosylformylglycinamidine synthase activity"/>
    <property type="evidence" value="ECO:0007669"/>
    <property type="project" value="UniProtKB-UniRule"/>
</dbReference>
<dbReference type="GO" id="GO:0006189">
    <property type="term" value="P:'de novo' IMP biosynthetic process"/>
    <property type="evidence" value="ECO:0007669"/>
    <property type="project" value="UniProtKB-UniRule"/>
</dbReference>
<dbReference type="CDD" id="cd02203">
    <property type="entry name" value="PurL_repeat1"/>
    <property type="match status" value="1"/>
</dbReference>
<dbReference type="CDD" id="cd02204">
    <property type="entry name" value="PurL_repeat2"/>
    <property type="match status" value="1"/>
</dbReference>
<dbReference type="FunFam" id="3.30.1330.10:FF:000004">
    <property type="entry name" value="Phosphoribosylformylglycinamidine synthase subunit PurL"/>
    <property type="match status" value="1"/>
</dbReference>
<dbReference type="Gene3D" id="3.90.650.10">
    <property type="entry name" value="PurM-like C-terminal domain"/>
    <property type="match status" value="2"/>
</dbReference>
<dbReference type="Gene3D" id="3.30.1330.10">
    <property type="entry name" value="PurM-like, N-terminal domain"/>
    <property type="match status" value="2"/>
</dbReference>
<dbReference type="HAMAP" id="MF_00420">
    <property type="entry name" value="PurL_2"/>
    <property type="match status" value="1"/>
</dbReference>
<dbReference type="InterPro" id="IPR010074">
    <property type="entry name" value="PRibForGlyAmidine_synth_PurL"/>
</dbReference>
<dbReference type="InterPro" id="IPR041609">
    <property type="entry name" value="PurL_linker"/>
</dbReference>
<dbReference type="InterPro" id="IPR010918">
    <property type="entry name" value="PurM-like_C_dom"/>
</dbReference>
<dbReference type="InterPro" id="IPR036676">
    <property type="entry name" value="PurM-like_C_sf"/>
</dbReference>
<dbReference type="InterPro" id="IPR016188">
    <property type="entry name" value="PurM-like_N"/>
</dbReference>
<dbReference type="InterPro" id="IPR036921">
    <property type="entry name" value="PurM-like_N_sf"/>
</dbReference>
<dbReference type="NCBIfam" id="TIGR01736">
    <property type="entry name" value="FGAM_synth_II"/>
    <property type="match status" value="1"/>
</dbReference>
<dbReference type="NCBIfam" id="NF002290">
    <property type="entry name" value="PRK01213.1"/>
    <property type="match status" value="1"/>
</dbReference>
<dbReference type="PANTHER" id="PTHR43555">
    <property type="entry name" value="PHOSPHORIBOSYLFORMYLGLYCINAMIDINE SYNTHASE SUBUNIT PURL"/>
    <property type="match status" value="1"/>
</dbReference>
<dbReference type="PANTHER" id="PTHR43555:SF1">
    <property type="entry name" value="PHOSPHORIBOSYLFORMYLGLYCINAMIDINE SYNTHASE SUBUNIT PURL"/>
    <property type="match status" value="1"/>
</dbReference>
<dbReference type="Pfam" id="PF00586">
    <property type="entry name" value="AIRS"/>
    <property type="match status" value="2"/>
</dbReference>
<dbReference type="Pfam" id="PF02769">
    <property type="entry name" value="AIRS_C"/>
    <property type="match status" value="2"/>
</dbReference>
<dbReference type="Pfam" id="PF18072">
    <property type="entry name" value="FGAR-AT_linker"/>
    <property type="match status" value="1"/>
</dbReference>
<dbReference type="PIRSF" id="PIRSF001587">
    <property type="entry name" value="FGAM_synthase_II"/>
    <property type="match status" value="1"/>
</dbReference>
<dbReference type="SUPFAM" id="SSF56042">
    <property type="entry name" value="PurM C-terminal domain-like"/>
    <property type="match status" value="2"/>
</dbReference>
<dbReference type="SUPFAM" id="SSF55326">
    <property type="entry name" value="PurM N-terminal domain-like"/>
    <property type="match status" value="2"/>
</dbReference>